<gene>
    <name evidence="1" type="primary">nudI</name>
    <name type="ordered locus">EcSMS35_2405</name>
</gene>
<dbReference type="EC" id="3.6.1.9" evidence="1"/>
<dbReference type="EC" id="3.6.1.12" evidence="1"/>
<dbReference type="EC" id="3.6.1.-" evidence="1"/>
<dbReference type="EC" id="3.6.1.23" evidence="1"/>
<dbReference type="EMBL" id="CP000970">
    <property type="protein sequence ID" value="ACB15537.1"/>
    <property type="status" value="ALT_INIT"/>
    <property type="molecule type" value="Genomic_DNA"/>
</dbReference>
<dbReference type="RefSeq" id="WP_001249884.1">
    <property type="nucleotide sequence ID" value="NC_010498.1"/>
</dbReference>
<dbReference type="SMR" id="B1LLK5"/>
<dbReference type="GeneID" id="75172382"/>
<dbReference type="KEGG" id="ecm:EcSMS35_2405"/>
<dbReference type="HOGENOM" id="CLU_037162_31_0_6"/>
<dbReference type="Proteomes" id="UP000007011">
    <property type="component" value="Chromosome"/>
</dbReference>
<dbReference type="GO" id="GO:0047840">
    <property type="term" value="F:dCTP diphosphatase activity"/>
    <property type="evidence" value="ECO:0007669"/>
    <property type="project" value="UniProtKB-EC"/>
</dbReference>
<dbReference type="GO" id="GO:0036218">
    <property type="term" value="F:dTTP diphosphatase activity"/>
    <property type="evidence" value="ECO:0007669"/>
    <property type="project" value="RHEA"/>
</dbReference>
<dbReference type="GO" id="GO:0004170">
    <property type="term" value="F:dUTP diphosphatase activity"/>
    <property type="evidence" value="ECO:0007669"/>
    <property type="project" value="UniProtKB-EC"/>
</dbReference>
<dbReference type="GO" id="GO:0000287">
    <property type="term" value="F:magnesium ion binding"/>
    <property type="evidence" value="ECO:0007669"/>
    <property type="project" value="UniProtKB-UniRule"/>
</dbReference>
<dbReference type="FunFam" id="3.90.79.10:FF:000039">
    <property type="entry name" value="Nucleoside triphosphatase NudI"/>
    <property type="match status" value="1"/>
</dbReference>
<dbReference type="Gene3D" id="3.90.79.10">
    <property type="entry name" value="Nucleoside Triphosphate Pyrophosphohydrolase"/>
    <property type="match status" value="1"/>
</dbReference>
<dbReference type="HAMAP" id="MF_01846">
    <property type="entry name" value="Nudix_NudI"/>
    <property type="match status" value="1"/>
</dbReference>
<dbReference type="InterPro" id="IPR023781">
    <property type="entry name" value="Nucleoside_triphosphatase_NudI"/>
</dbReference>
<dbReference type="InterPro" id="IPR020476">
    <property type="entry name" value="Nudix_hydrolase"/>
</dbReference>
<dbReference type="InterPro" id="IPR015797">
    <property type="entry name" value="NUDIX_hydrolase-like_dom_sf"/>
</dbReference>
<dbReference type="InterPro" id="IPR020084">
    <property type="entry name" value="NUDIX_hydrolase_CS"/>
</dbReference>
<dbReference type="InterPro" id="IPR000086">
    <property type="entry name" value="NUDIX_hydrolase_dom"/>
</dbReference>
<dbReference type="NCBIfam" id="NF012016">
    <property type="entry name" value="PRK15472.1"/>
    <property type="match status" value="1"/>
</dbReference>
<dbReference type="PANTHER" id="PTHR43046">
    <property type="entry name" value="GDP-MANNOSE MANNOSYL HYDROLASE"/>
    <property type="match status" value="1"/>
</dbReference>
<dbReference type="PANTHER" id="PTHR43046:SF14">
    <property type="entry name" value="MUTT_NUDIX FAMILY PROTEIN"/>
    <property type="match status" value="1"/>
</dbReference>
<dbReference type="Pfam" id="PF00293">
    <property type="entry name" value="NUDIX"/>
    <property type="match status" value="1"/>
</dbReference>
<dbReference type="PRINTS" id="PR00502">
    <property type="entry name" value="NUDIXFAMILY"/>
</dbReference>
<dbReference type="SUPFAM" id="SSF55811">
    <property type="entry name" value="Nudix"/>
    <property type="match status" value="1"/>
</dbReference>
<dbReference type="PROSITE" id="PS51462">
    <property type="entry name" value="NUDIX"/>
    <property type="match status" value="1"/>
</dbReference>
<dbReference type="PROSITE" id="PS00893">
    <property type="entry name" value="NUDIX_BOX"/>
    <property type="match status" value="1"/>
</dbReference>
<organism>
    <name type="scientific">Escherichia coli (strain SMS-3-5 / SECEC)</name>
    <dbReference type="NCBI Taxonomy" id="439855"/>
    <lineage>
        <taxon>Bacteria</taxon>
        <taxon>Pseudomonadati</taxon>
        <taxon>Pseudomonadota</taxon>
        <taxon>Gammaproteobacteria</taxon>
        <taxon>Enterobacterales</taxon>
        <taxon>Enterobacteriaceae</taxon>
        <taxon>Escherichia</taxon>
    </lineage>
</organism>
<comment type="function">
    <text evidence="1">Catalyzes the hydrolysis of nucleoside triphosphates, with a preference for pyrimidine deoxynucleoside triphosphates (dUTP, dTTP and dCTP).</text>
</comment>
<comment type="catalytic activity">
    <reaction evidence="1">
        <text>a ribonucleoside 5'-triphosphate + H2O = a ribonucleoside 5'-phosphate + diphosphate + H(+)</text>
        <dbReference type="Rhea" id="RHEA:23996"/>
        <dbReference type="ChEBI" id="CHEBI:15377"/>
        <dbReference type="ChEBI" id="CHEBI:15378"/>
        <dbReference type="ChEBI" id="CHEBI:33019"/>
        <dbReference type="ChEBI" id="CHEBI:58043"/>
        <dbReference type="ChEBI" id="CHEBI:61557"/>
        <dbReference type="EC" id="3.6.1.9"/>
    </reaction>
</comment>
<comment type="catalytic activity">
    <reaction evidence="1">
        <text>a 2'-deoxyribonucleoside 5'-triphosphate + H2O = a 2'-deoxyribonucleoside 5'-phosphate + diphosphate + H(+)</text>
        <dbReference type="Rhea" id="RHEA:44644"/>
        <dbReference type="ChEBI" id="CHEBI:15377"/>
        <dbReference type="ChEBI" id="CHEBI:15378"/>
        <dbReference type="ChEBI" id="CHEBI:33019"/>
        <dbReference type="ChEBI" id="CHEBI:61560"/>
        <dbReference type="ChEBI" id="CHEBI:65317"/>
        <dbReference type="EC" id="3.6.1.9"/>
    </reaction>
</comment>
<comment type="catalytic activity">
    <reaction evidence="1">
        <text>dUTP + H2O = dUMP + diphosphate + H(+)</text>
        <dbReference type="Rhea" id="RHEA:10248"/>
        <dbReference type="ChEBI" id="CHEBI:15377"/>
        <dbReference type="ChEBI" id="CHEBI:15378"/>
        <dbReference type="ChEBI" id="CHEBI:33019"/>
        <dbReference type="ChEBI" id="CHEBI:61555"/>
        <dbReference type="ChEBI" id="CHEBI:246422"/>
        <dbReference type="EC" id="3.6.1.9"/>
    </reaction>
</comment>
<comment type="catalytic activity">
    <reaction evidence="1">
        <text>dUTP + H2O = dUMP + diphosphate + H(+)</text>
        <dbReference type="Rhea" id="RHEA:10248"/>
        <dbReference type="ChEBI" id="CHEBI:15377"/>
        <dbReference type="ChEBI" id="CHEBI:15378"/>
        <dbReference type="ChEBI" id="CHEBI:33019"/>
        <dbReference type="ChEBI" id="CHEBI:61555"/>
        <dbReference type="ChEBI" id="CHEBI:246422"/>
        <dbReference type="EC" id="3.6.1.23"/>
    </reaction>
</comment>
<comment type="catalytic activity">
    <reaction evidence="1">
        <text>dTTP + H2O = dTMP + diphosphate + H(+)</text>
        <dbReference type="Rhea" id="RHEA:28534"/>
        <dbReference type="ChEBI" id="CHEBI:15377"/>
        <dbReference type="ChEBI" id="CHEBI:15378"/>
        <dbReference type="ChEBI" id="CHEBI:33019"/>
        <dbReference type="ChEBI" id="CHEBI:37568"/>
        <dbReference type="ChEBI" id="CHEBI:63528"/>
        <dbReference type="EC" id="3.6.1.9"/>
    </reaction>
</comment>
<comment type="catalytic activity">
    <reaction evidence="1">
        <text>dCTP + H2O = dCMP + diphosphate + H(+)</text>
        <dbReference type="Rhea" id="RHEA:22636"/>
        <dbReference type="ChEBI" id="CHEBI:15377"/>
        <dbReference type="ChEBI" id="CHEBI:15378"/>
        <dbReference type="ChEBI" id="CHEBI:33019"/>
        <dbReference type="ChEBI" id="CHEBI:57566"/>
        <dbReference type="ChEBI" id="CHEBI:61481"/>
        <dbReference type="EC" id="3.6.1.9"/>
    </reaction>
</comment>
<comment type="catalytic activity">
    <reaction evidence="1">
        <text>dCTP + H2O = dCMP + diphosphate + H(+)</text>
        <dbReference type="Rhea" id="RHEA:22636"/>
        <dbReference type="ChEBI" id="CHEBI:15377"/>
        <dbReference type="ChEBI" id="CHEBI:15378"/>
        <dbReference type="ChEBI" id="CHEBI:33019"/>
        <dbReference type="ChEBI" id="CHEBI:57566"/>
        <dbReference type="ChEBI" id="CHEBI:61481"/>
        <dbReference type="EC" id="3.6.1.12"/>
    </reaction>
</comment>
<comment type="cofactor">
    <cofactor evidence="1">
        <name>Mg(2+)</name>
        <dbReference type="ChEBI" id="CHEBI:18420"/>
    </cofactor>
</comment>
<comment type="subunit">
    <text evidence="1">Monomer.</text>
</comment>
<comment type="similarity">
    <text evidence="1">Belongs to the Nudix hydrolase family. NudI subfamily.</text>
</comment>
<comment type="sequence caution" evidence="2">
    <conflict type="erroneous initiation">
        <sequence resource="EMBL-CDS" id="ACB15537"/>
    </conflict>
</comment>
<proteinExistence type="inferred from homology"/>
<protein>
    <recommendedName>
        <fullName evidence="1">Nucleoside triphosphatase NudI</fullName>
        <ecNumber evidence="1">3.6.1.9</ecNumber>
    </recommendedName>
    <alternativeName>
        <fullName evidence="1">Nucleotide diphosphatase NudI</fullName>
    </alternativeName>
    <alternativeName>
        <fullName evidence="1">Pyrimidine deoxynucleoside triphosphate diphosphatase</fullName>
    </alternativeName>
    <alternativeName>
        <fullName evidence="1">dCTP diphosphatase</fullName>
        <ecNumber evidence="1">3.6.1.12</ecNumber>
    </alternativeName>
    <alternativeName>
        <fullName evidence="1">dTTP diphosphatase</fullName>
        <ecNumber evidence="1">3.6.1.-</ecNumber>
    </alternativeName>
    <alternativeName>
        <fullName evidence="1">dUTP diphosphatase</fullName>
        <ecNumber evidence="1">3.6.1.23</ecNumber>
    </alternativeName>
</protein>
<name>NUDI_ECOSM</name>
<reference key="1">
    <citation type="journal article" date="2008" name="J. Bacteriol.">
        <title>Insights into the environmental resistance gene pool from the genome sequence of the multidrug-resistant environmental isolate Escherichia coli SMS-3-5.</title>
        <authorList>
            <person name="Fricke W.F."/>
            <person name="Wright M.S."/>
            <person name="Lindell A.H."/>
            <person name="Harkins D.M."/>
            <person name="Baker-Austin C."/>
            <person name="Ravel J."/>
            <person name="Stepanauskas R."/>
        </authorList>
    </citation>
    <scope>NUCLEOTIDE SEQUENCE [LARGE SCALE GENOMIC DNA]</scope>
    <source>
        <strain>SMS-3-5 / SECEC</strain>
    </source>
</reference>
<evidence type="ECO:0000255" key="1">
    <source>
        <dbReference type="HAMAP-Rule" id="MF_01846"/>
    </source>
</evidence>
<evidence type="ECO:0000305" key="2"/>
<keyword id="KW-0378">Hydrolase</keyword>
<keyword id="KW-0460">Magnesium</keyword>
<sequence length="141" mass="16371">MRQRTIVCPLIQNDGAYLLCKMADDRGVFPGQWALSGGGVEPGERIEEALRREIREELGEQLLLTEITPWTFSDDIRTKTYADGRKEEIYMIYLIFDCVSANREVKINEEFQDYAWVKPEDLVHYDLNVATRKTLRLKGLL</sequence>
<accession>B1LLK5</accession>
<feature type="chain" id="PRO_0000342126" description="Nucleoside triphosphatase NudI">
    <location>
        <begin position="1"/>
        <end position="141"/>
    </location>
</feature>
<feature type="domain" description="Nudix hydrolase" evidence="1">
    <location>
        <begin position="1"/>
        <end position="141"/>
    </location>
</feature>
<feature type="short sequence motif" description="Nudix box">
    <location>
        <begin position="38"/>
        <end position="59"/>
    </location>
</feature>